<protein>
    <recommendedName>
        <fullName>Ribosome-inactivating protein saporin-6</fullName>
        <shortName>SAP-6</shortName>
        <shortName>SO-6</shortName>
        <ecNumber>3.2.2.22</ecNumber>
    </recommendedName>
    <alternativeName>
        <fullName>rRNA N-glycosidase</fullName>
    </alternativeName>
</protein>
<proteinExistence type="evidence at protein level"/>
<comment type="function">
    <text>Ribosome-inactivating protein of type 1, inhibits protein synthesis in animal cells. Useful as immunotoxin for pharmacological applications.</text>
</comment>
<comment type="catalytic activity">
    <reaction>
        <text>Endohydrolysis of the N-glycosidic bond at one specific adenosine on the 28S rRNA.</text>
        <dbReference type="EC" id="3.2.2.22"/>
    </reaction>
</comment>
<comment type="tissue specificity">
    <text>Seeds and leaves of the plant.</text>
</comment>
<comment type="similarity">
    <text evidence="6">Belongs to the ribosome-inactivating protein family. Type 1 RIP subfamily.</text>
</comment>
<organism>
    <name type="scientific">Saponaria officinalis</name>
    <name type="common">Common soapwort</name>
    <name type="synonym">Lychnis saponaria</name>
    <dbReference type="NCBI Taxonomy" id="3572"/>
    <lineage>
        <taxon>Eukaryota</taxon>
        <taxon>Viridiplantae</taxon>
        <taxon>Streptophyta</taxon>
        <taxon>Embryophyta</taxon>
        <taxon>Tracheophyta</taxon>
        <taxon>Spermatophyta</taxon>
        <taxon>Magnoliopsida</taxon>
        <taxon>eudicotyledons</taxon>
        <taxon>Gunneridae</taxon>
        <taxon>Pentapetalae</taxon>
        <taxon>Caryophyllales</taxon>
        <taxon>Caryophyllaceae</taxon>
        <taxon>Caryophylleae</taxon>
        <taxon>Saponaria</taxon>
    </lineage>
</organism>
<evidence type="ECO:0000255" key="1"/>
<evidence type="ECO:0000269" key="2">
    <source>
    </source>
</evidence>
<evidence type="ECO:0000269" key="3">
    <source>
    </source>
</evidence>
<evidence type="ECO:0000269" key="4">
    <source>
    </source>
</evidence>
<evidence type="ECO:0000269" key="5">
    <source>
    </source>
</evidence>
<evidence type="ECO:0000305" key="6"/>
<evidence type="ECO:0007829" key="7">
    <source>
        <dbReference type="PDB" id="1QI7"/>
    </source>
</evidence>
<keyword id="KW-0002">3D-structure</keyword>
<keyword id="KW-0903">Direct protein sequencing</keyword>
<keyword id="KW-0325">Glycoprotein</keyword>
<keyword id="KW-0378">Hydrolase</keyword>
<keyword id="KW-0611">Plant defense</keyword>
<keyword id="KW-0652">Protein synthesis inhibitor</keyword>
<keyword id="KW-0732">Signal</keyword>
<keyword id="KW-0800">Toxin</keyword>
<gene>
    <name type="primary">SAP6</name>
</gene>
<sequence length="299" mass="33607">MKIYVVATIAWILLQFSAWTTTDAVTSITLDLVNPTAGQYSSFVDKIRNNVKDPNLKYGGTDIAVIGPPSKEKFLRINFQSSRGTVSLGLKRDNLYVVAYLAMDNTNVNRAYYFRSEITSAESTALFPEATTANQKALEYTEDYQSIEKNAQITQGDQSRKELGLGIDLLSTSMEAVNKKARVVKDEARFLLIAIQMTAEAARFRYIQNLVIKNFPNKFNSENKVIQFEVNWKKISTAIYGDAKNGVFNKDYDFGFGKVRQVKDLQMGLLMYLGKPKSSNEANSTVRHYGPLKPTLLIT</sequence>
<reference key="1">
    <citation type="journal article" date="1989" name="Eur. J. Biochem.">
        <title>Nucleotide sequence of cDNA coding for saporin-6, a type-1 ribosome-inactivating protein from Saponaria officinalis.</title>
        <authorList>
            <person name="Benatti L."/>
            <person name="Saccardo M.B."/>
            <person name="Dani M."/>
            <person name="Nitti G."/>
            <person name="Sassano M."/>
            <person name="Lorenzetti R."/>
            <person name="Lappi D.A."/>
            <person name="Soria M."/>
        </authorList>
    </citation>
    <scope>NUCLEOTIDE SEQUENCE [MRNA] OF 1-283</scope>
    <scope>PROTEIN SEQUENCE OF 25-115; 206-213 AND 234-277</scope>
    <source>
        <tissue>Leaf</tissue>
    </source>
</reference>
<reference key="2">
    <citation type="journal article" date="1993" name="J. Biol. Chem.">
        <title>The expression of saporin, a ribosome-inactivating protein from the plant Saponaria officinalis, in Escherichia coli.</title>
        <authorList>
            <person name="Barthelemy I."/>
            <person name="Martineau D."/>
            <person name="Ong M."/>
            <person name="Matsunami R."/>
            <person name="Ling N."/>
            <person name="Benatti L."/>
            <person name="Cavallaro U."/>
            <person name="Soria M."/>
            <person name="Lappi D.A."/>
        </authorList>
    </citation>
    <scope>NUCLEOTIDE SEQUENCE [GENOMIC DNA] OF 25-277</scope>
</reference>
<reference key="3">
    <citation type="journal article" date="1991" name="FEBS Lett.">
        <title>A Saporin-6 cDNA containing a precursor sequence coding for a carboxyl-terminal extension.</title>
        <authorList>
            <person name="Benatti L."/>
            <person name="Nitti G."/>
            <person name="Solinas M."/>
            <person name="Valsasina B."/>
            <person name="Vitale A."/>
            <person name="Ceriotti A."/>
            <person name="Soria M.R."/>
        </authorList>
    </citation>
    <scope>NUCLEOTIDE SEQUENCE OF 275-299</scope>
    <source>
        <tissue>Leaf</tissue>
    </source>
</reference>
<reference key="4">
    <citation type="journal article" date="1985" name="Biochem. Biophys. Res. Commun.">
        <title>Characterization of a Saponaria officinalis seed ribosome-inactivating protein: immunoreactivity and sequence homologies.</title>
        <authorList>
            <person name="Lappi D.A."/>
            <person name="Esch F.S."/>
            <person name="Barbieri L."/>
            <person name="Stirpe F."/>
            <person name="Soria M."/>
        </authorList>
    </citation>
    <scope>PROTEIN SEQUENCE OF 25-61</scope>
</reference>
<reference key="5">
    <citation type="journal article" date="1990" name="Mol. Gen. Genet.">
        <title>Synthesis of saporin gene probes from partial protein sequence data: use of inosine-oligonucleotides, genomic DNA and the polymerase chain reaction.</title>
        <authorList>
            <person name="Fordham-Skelton A.P."/>
            <person name="Yarwood A."/>
            <person name="Croy R.R.D."/>
        </authorList>
    </citation>
    <scope>PROTEIN SEQUENCE OF 25-72 AND 114-154</scope>
</reference>
<reference key="6">
    <citation type="journal article" date="2000" name="FEBS Lett.">
        <title>The crystal structure of saporin SO6 from Saponaria officinalis and its interaction with the ribosome.</title>
        <authorList>
            <person name="Savino C."/>
            <person name="Federici L."/>
            <person name="Ippoliti R."/>
            <person name="Lendaro E."/>
            <person name="Tsernoglou D."/>
        </authorList>
    </citation>
    <scope>X-RAY CRYSTALLOGRAPHY (2.0 ANGSTROMS) OF 25-277</scope>
    <scope>ACTIVE SITE</scope>
</reference>
<dbReference type="EC" id="3.2.2.22"/>
<dbReference type="EMBL" id="X15655">
    <property type="protein sequence ID" value="CAA33685.1"/>
    <property type="molecule type" value="mRNA"/>
</dbReference>
<dbReference type="EMBL" id="S57638">
    <property type="protein sequence ID" value="AAB25863.1"/>
    <property type="molecule type" value="mRNA"/>
</dbReference>
<dbReference type="EMBL" id="X69135">
    <property type="protein sequence ID" value="CAA48889.1"/>
    <property type="molecule type" value="Genomic_DNA"/>
</dbReference>
<dbReference type="EMBL" id="X64917">
    <property type="protein sequence ID" value="CAA46110.1"/>
    <property type="molecule type" value="mRNA"/>
</dbReference>
<dbReference type="PIR" id="S05205">
    <property type="entry name" value="S05205"/>
</dbReference>
<dbReference type="PIR" id="S16487">
    <property type="entry name" value="S16487"/>
</dbReference>
<dbReference type="PIR" id="S18307">
    <property type="entry name" value="S18307"/>
</dbReference>
<dbReference type="PIR" id="S29931">
    <property type="entry name" value="S29931"/>
</dbReference>
<dbReference type="PIR" id="S38527">
    <property type="entry name" value="S38527"/>
</dbReference>
<dbReference type="PDB" id="1QI7">
    <property type="method" value="X-ray"/>
    <property type="resolution" value="2.00 A"/>
    <property type="chains" value="A=25-277"/>
</dbReference>
<dbReference type="PDBsum" id="1QI7"/>
<dbReference type="PCDDB" id="P20656"/>
<dbReference type="SMR" id="P20656"/>
<dbReference type="Allergome" id="2805">
    <property type="allergen name" value="Sap o RIP"/>
</dbReference>
<dbReference type="GlyCosmos" id="P20656">
    <property type="glycosylation" value="1 site, No reported glycans"/>
</dbReference>
<dbReference type="EvolutionaryTrace" id="P20656"/>
<dbReference type="GO" id="GO:0030598">
    <property type="term" value="F:rRNA N-glycosylase activity"/>
    <property type="evidence" value="ECO:0007669"/>
    <property type="project" value="UniProtKB-EC"/>
</dbReference>
<dbReference type="GO" id="GO:0090729">
    <property type="term" value="F:toxin activity"/>
    <property type="evidence" value="ECO:0007669"/>
    <property type="project" value="UniProtKB-KW"/>
</dbReference>
<dbReference type="GO" id="GO:0006952">
    <property type="term" value="P:defense response"/>
    <property type="evidence" value="ECO:0007669"/>
    <property type="project" value="UniProtKB-KW"/>
</dbReference>
<dbReference type="GO" id="GO:0017148">
    <property type="term" value="P:negative regulation of translation"/>
    <property type="evidence" value="ECO:0007669"/>
    <property type="project" value="UniProtKB-KW"/>
</dbReference>
<dbReference type="Gene3D" id="3.40.420.10">
    <property type="entry name" value="Ricin (A subunit), domain 1"/>
    <property type="match status" value="1"/>
</dbReference>
<dbReference type="Gene3D" id="4.10.470.10">
    <property type="entry name" value="Ricin (A Subunit), domain 2"/>
    <property type="match status" value="1"/>
</dbReference>
<dbReference type="InterPro" id="IPR036041">
    <property type="entry name" value="Ribosome-inact_prot_sf"/>
</dbReference>
<dbReference type="InterPro" id="IPR017989">
    <property type="entry name" value="Ribosome_inactivat_1/2"/>
</dbReference>
<dbReference type="InterPro" id="IPR001574">
    <property type="entry name" value="Ribosome_inactivat_prot"/>
</dbReference>
<dbReference type="InterPro" id="IPR017988">
    <property type="entry name" value="Ribosome_inactivat_prot_CS"/>
</dbReference>
<dbReference type="InterPro" id="IPR016138">
    <property type="entry name" value="Ribosome_inactivat_prot_sub1"/>
</dbReference>
<dbReference type="InterPro" id="IPR016139">
    <property type="entry name" value="Ribosome_inactivat_prot_sub2"/>
</dbReference>
<dbReference type="PANTHER" id="PTHR33453">
    <property type="match status" value="1"/>
</dbReference>
<dbReference type="PANTHER" id="PTHR33453:SF34">
    <property type="entry name" value="RIBOSOME-INACTIVATING PROTEIN"/>
    <property type="match status" value="1"/>
</dbReference>
<dbReference type="Pfam" id="PF00161">
    <property type="entry name" value="RIP"/>
    <property type="match status" value="1"/>
</dbReference>
<dbReference type="PRINTS" id="PR00396">
    <property type="entry name" value="SHIGARICIN"/>
</dbReference>
<dbReference type="SUPFAM" id="SSF56371">
    <property type="entry name" value="Ribosome inactivating proteins (RIP)"/>
    <property type="match status" value="1"/>
</dbReference>
<dbReference type="PROSITE" id="PS00275">
    <property type="entry name" value="SHIGA_RICIN"/>
    <property type="match status" value="1"/>
</dbReference>
<feature type="signal peptide" evidence="3 4 5">
    <location>
        <begin position="1"/>
        <end position="24"/>
    </location>
</feature>
<feature type="chain" id="PRO_0000030776" description="Ribosome-inactivating protein saporin-6">
    <location>
        <begin position="25"/>
        <end position="277"/>
    </location>
</feature>
<feature type="propeptide" id="PRO_0000030777" evidence="1">
    <location>
        <begin position="278"/>
        <end position="299"/>
    </location>
</feature>
<feature type="active site" evidence="2">
    <location>
        <position position="200"/>
    </location>
</feature>
<feature type="glycosylation site" description="N-linked (GlcNAc...) asparagine" evidence="1">
    <location>
        <position position="283"/>
    </location>
</feature>
<feature type="sequence variant">
    <original>E</original>
    <variation>D</variation>
    <location>
        <position position="72"/>
    </location>
</feature>
<feature type="sequence variant">
    <original>R</original>
    <variation>K</variation>
    <location>
        <position position="115"/>
    </location>
</feature>
<feature type="sequence conflict" description="In Ref. 4; AA sequence." evidence="6" ref="4">
    <original>G</original>
    <variation>S</variation>
    <location>
        <position position="60"/>
    </location>
</feature>
<feature type="sequence conflict" description="In Ref. 2 and 5." evidence="6" ref="2 5">
    <original>S</original>
    <variation>L</variation>
    <location>
        <position position="123"/>
    </location>
</feature>
<feature type="sequence conflict" description="In Ref. 1; AA sequence." evidence="6" ref="1">
    <original>I</original>
    <variation>T</variation>
    <location>
        <position position="212"/>
    </location>
</feature>
<feature type="strand" evidence="7">
    <location>
        <begin position="26"/>
        <end position="31"/>
    </location>
</feature>
<feature type="helix" evidence="7">
    <location>
        <begin position="37"/>
        <end position="51"/>
    </location>
</feature>
<feature type="strand" evidence="7">
    <location>
        <begin position="74"/>
        <end position="81"/>
    </location>
</feature>
<feature type="strand" evidence="7">
    <location>
        <begin position="84"/>
        <end position="91"/>
    </location>
</feature>
<feature type="turn" evidence="7">
    <location>
        <begin position="92"/>
        <end position="94"/>
    </location>
</feature>
<feature type="strand" evidence="7">
    <location>
        <begin position="97"/>
        <end position="103"/>
    </location>
</feature>
<feature type="strand" evidence="7">
    <location>
        <begin position="109"/>
        <end position="113"/>
    </location>
</feature>
<feature type="turn" evidence="7">
    <location>
        <begin position="115"/>
        <end position="117"/>
    </location>
</feature>
<feature type="helix" evidence="7">
    <location>
        <begin position="120"/>
        <end position="126"/>
    </location>
</feature>
<feature type="helix" evidence="7">
    <location>
        <begin position="132"/>
        <end position="134"/>
    </location>
</feature>
<feature type="strand" evidence="7">
    <location>
        <begin position="135"/>
        <end position="137"/>
    </location>
</feature>
<feature type="helix" evidence="7">
    <location>
        <begin position="144"/>
        <end position="151"/>
    </location>
</feature>
<feature type="helix" evidence="7">
    <location>
        <begin position="160"/>
        <end position="163"/>
    </location>
</feature>
<feature type="helix" evidence="7">
    <location>
        <begin position="167"/>
        <end position="175"/>
    </location>
</feature>
<feature type="turn" evidence="7">
    <location>
        <begin position="176"/>
        <end position="179"/>
    </location>
</feature>
<feature type="helix" evidence="7">
    <location>
        <begin position="184"/>
        <end position="196"/>
    </location>
</feature>
<feature type="helix" evidence="7">
    <location>
        <begin position="199"/>
        <end position="203"/>
    </location>
</feature>
<feature type="helix" evidence="7">
    <location>
        <begin position="205"/>
        <end position="213"/>
    </location>
</feature>
<feature type="turn" evidence="7">
    <location>
        <begin position="214"/>
        <end position="216"/>
    </location>
</feature>
<feature type="helix" evidence="7">
    <location>
        <begin position="223"/>
        <end position="230"/>
    </location>
</feature>
<feature type="helix" evidence="7">
    <location>
        <begin position="232"/>
        <end position="242"/>
    </location>
</feature>
<feature type="strand" evidence="7">
    <location>
        <begin position="247"/>
        <end position="261"/>
    </location>
</feature>
<feature type="helix" evidence="7">
    <location>
        <begin position="262"/>
        <end position="265"/>
    </location>
</feature>
<name>RIP6_SAPOF</name>
<accession>P20656</accession>
<accession>Q41392</accession>